<evidence type="ECO:0000255" key="1">
    <source>
        <dbReference type="PROSITE-ProRule" id="PRU10072"/>
    </source>
</evidence>
<evidence type="ECO:0000269" key="2">
    <source>
    </source>
</evidence>
<evidence type="ECO:0000269" key="3">
    <source>
    </source>
</evidence>
<evidence type="ECO:0000269" key="4">
    <source>
    </source>
</evidence>
<evidence type="ECO:0000269" key="5">
    <source>
    </source>
</evidence>
<evidence type="ECO:0000269" key="6">
    <source>
    </source>
</evidence>
<evidence type="ECO:0000305" key="7"/>
<evidence type="ECO:0007744" key="8">
    <source>
        <dbReference type="PDB" id="2OWQ"/>
    </source>
</evidence>
<evidence type="ECO:0007829" key="9">
    <source>
        <dbReference type="PDB" id="2OWQ"/>
    </source>
</evidence>
<evidence type="ECO:0007829" key="10">
    <source>
        <dbReference type="PDB" id="5JX3"/>
    </source>
</evidence>
<evidence type="ECO:0007829" key="11">
    <source>
        <dbReference type="PDB" id="5JX8"/>
    </source>
</evidence>
<dbReference type="EC" id="3.2.2.27" evidence="5"/>
<dbReference type="EMBL" id="M15058">
    <property type="protein sequence ID" value="AAA48258.1"/>
    <property type="molecule type" value="Genomic_DNA"/>
</dbReference>
<dbReference type="EMBL" id="AY243312">
    <property type="protein sequence ID" value="AAO89388.1"/>
    <property type="molecule type" value="Genomic_DNA"/>
</dbReference>
<dbReference type="PIR" id="A93025">
    <property type="entry name" value="QQVZ6"/>
</dbReference>
<dbReference type="PDB" id="2OWQ">
    <property type="method" value="X-ray"/>
    <property type="resolution" value="2.40 A"/>
    <property type="chains" value="A/B=1-218"/>
</dbReference>
<dbReference type="PDB" id="4QCB">
    <property type="method" value="X-ray"/>
    <property type="resolution" value="2.89 A"/>
    <property type="chains" value="A/B=1-218"/>
</dbReference>
<dbReference type="PDB" id="5JX0">
    <property type="method" value="X-ray"/>
    <property type="resolution" value="2.40 A"/>
    <property type="chains" value="A/B/C/D=1-218"/>
</dbReference>
<dbReference type="PDB" id="5JX3">
    <property type="method" value="X-ray"/>
    <property type="resolution" value="2.30 A"/>
    <property type="chains" value="A/B/C/D/E/F/G/H=1-218"/>
</dbReference>
<dbReference type="PDB" id="5JX8">
    <property type="method" value="X-ray"/>
    <property type="resolution" value="2.00 A"/>
    <property type="chains" value="A/B=1-218"/>
</dbReference>
<dbReference type="PDBsum" id="2OWQ"/>
<dbReference type="PDBsum" id="4QCB"/>
<dbReference type="PDBsum" id="5JX0"/>
<dbReference type="PDBsum" id="5JX3"/>
<dbReference type="PDBsum" id="5JX8"/>
<dbReference type="SMR" id="P04303"/>
<dbReference type="DIP" id="DIP-2182N"/>
<dbReference type="IntAct" id="P04303">
    <property type="interactions" value="1"/>
</dbReference>
<dbReference type="MINT" id="P04303"/>
<dbReference type="BindingDB" id="P04303"/>
<dbReference type="ChEMBL" id="CHEMBL1772931"/>
<dbReference type="DrugCentral" id="P04303"/>
<dbReference type="KEGG" id="vg:3707565"/>
<dbReference type="BRENDA" id="3.2.2.27">
    <property type="organism ID" value="6591"/>
</dbReference>
<dbReference type="EvolutionaryTrace" id="P04303"/>
<dbReference type="Proteomes" id="UP000000344">
    <property type="component" value="Genome"/>
</dbReference>
<dbReference type="GO" id="GO:0003677">
    <property type="term" value="F:DNA binding"/>
    <property type="evidence" value="ECO:0007669"/>
    <property type="project" value="UniProtKB-KW"/>
</dbReference>
<dbReference type="GO" id="GO:0004844">
    <property type="term" value="F:uracil DNA N-glycosylase activity"/>
    <property type="evidence" value="ECO:0007669"/>
    <property type="project" value="UniProtKB-EC"/>
</dbReference>
<dbReference type="GO" id="GO:0006281">
    <property type="term" value="P:DNA repair"/>
    <property type="evidence" value="ECO:0007669"/>
    <property type="project" value="UniProtKB-KW"/>
</dbReference>
<dbReference type="CDD" id="cd19372">
    <property type="entry name" value="UDG_F1_VAVC_D4-like"/>
    <property type="match status" value="1"/>
</dbReference>
<dbReference type="FunFam" id="3.40.470.10:FF:000011">
    <property type="entry name" value="Uracil-DNA glycosylase"/>
    <property type="match status" value="1"/>
</dbReference>
<dbReference type="Gene3D" id="3.40.470.10">
    <property type="entry name" value="Uracil-DNA glycosylase-like domain"/>
    <property type="match status" value="1"/>
</dbReference>
<dbReference type="InterPro" id="IPR018085">
    <property type="entry name" value="Ura-DNA_Glyclase_AS"/>
</dbReference>
<dbReference type="InterPro" id="IPR036895">
    <property type="entry name" value="Uracil-DNA_glycosylase-like_sf"/>
</dbReference>
<dbReference type="SUPFAM" id="SSF52141">
    <property type="entry name" value="Uracil-DNA glycosylase-like"/>
    <property type="match status" value="1"/>
</dbReference>
<dbReference type="PROSITE" id="PS00130">
    <property type="entry name" value="U_DNA_GLYCOSYLASE"/>
    <property type="match status" value="1"/>
</dbReference>
<comment type="function">
    <text evidence="3 4 5 6">Plays an essential role in viral replication as a component of the DNA polymerase processivity factor (PubMed:17605817, PubMed:20861259). Excises uracil residues from the DNA which can arise as a result of misincorporation of dUMP residues by DNA polymerase or due to deamination of cytosine (PubMed:21572084).</text>
</comment>
<comment type="catalytic activity">
    <reaction evidence="5">
        <text>Hydrolyzes single-stranded DNA or mismatched double-stranded DNA and polynucleotides, releasing free uracil.</text>
        <dbReference type="EC" id="3.2.2.27"/>
    </reaction>
</comment>
<comment type="subunit">
    <text evidence="2 3 4 5">Homodimer (PubMed:17605817). Interacts with protein OPG148 (PubMed:20861259). Component of the Uracil-DNA glycosylase(UDG)-OPG148-polymerase complex; OPG148 and UDG form a heterodimeric processivity factor that associates with OPG71 to form the processive polymerase holoenzyme.</text>
</comment>
<comment type="similarity">
    <text evidence="7">Belongs to the uracil-DNA glycosylase (UDG) superfamily. UNG family.</text>
</comment>
<feature type="chain" id="PRO_0000176181" description="Uracil-DNA glycosylase">
    <location>
        <begin position="1"/>
        <end position="218"/>
    </location>
</feature>
<feature type="active site" description="Proton acceptor" evidence="1">
    <location>
        <position position="68"/>
    </location>
</feature>
<feature type="mutagenesis site" description="About 80% loss of processive DNA synthesis but unaffected UDG activity." evidence="4">
    <original>K</original>
    <variation>V</variation>
    <location>
        <position position="126"/>
    </location>
</feature>
<feature type="mutagenesis site" description="About 90% loss of processive DNA synthesis but unaffected UDG activity." evidence="4">
    <original>K</original>
    <variation>V</variation>
    <location>
        <position position="160"/>
    </location>
</feature>
<feature type="mutagenesis site" description="About 60% loss of processive DNA synthesis but unaffected UDG activity." evidence="4">
    <original>R</original>
    <variation>V</variation>
    <location>
        <position position="187"/>
    </location>
</feature>
<feature type="sequence conflict" description="In Ref. 2; AAA48258 and 3; AAO89388." evidence="7" ref="2 3">
    <original>Y</original>
    <variation>F</variation>
    <location>
        <position position="163"/>
    </location>
</feature>
<feature type="strand" evidence="11">
    <location>
        <begin position="1"/>
        <end position="5"/>
    </location>
</feature>
<feature type="strand" evidence="9">
    <location>
        <begin position="8"/>
        <end position="10"/>
    </location>
</feature>
<feature type="strand" evidence="11">
    <location>
        <begin position="12"/>
        <end position="16"/>
    </location>
</feature>
<feature type="helix" evidence="11">
    <location>
        <begin position="17"/>
        <end position="19"/>
    </location>
</feature>
<feature type="helix" evidence="11">
    <location>
        <begin position="20"/>
        <end position="38"/>
    </location>
</feature>
<feature type="strand" evidence="11">
    <location>
        <begin position="42"/>
        <end position="44"/>
    </location>
</feature>
<feature type="helix" evidence="11">
    <location>
        <begin position="46"/>
        <end position="48"/>
    </location>
</feature>
<feature type="helix" evidence="11">
    <location>
        <begin position="51"/>
        <end position="54"/>
    </location>
</feature>
<feature type="strand" evidence="11">
    <location>
        <begin position="62"/>
        <end position="68"/>
    </location>
</feature>
<feature type="strand" evidence="9">
    <location>
        <begin position="71"/>
        <end position="73"/>
    </location>
</feature>
<feature type="helix" evidence="11">
    <location>
        <begin position="87"/>
        <end position="100"/>
    </location>
</feature>
<feature type="strand" evidence="11">
    <location>
        <begin position="106"/>
        <end position="108"/>
    </location>
</feature>
<feature type="helix" evidence="11">
    <location>
        <begin position="110"/>
        <end position="112"/>
    </location>
</feature>
<feature type="strand" evidence="11">
    <location>
        <begin position="116"/>
        <end position="123"/>
    </location>
</feature>
<feature type="turn" evidence="11">
    <location>
        <begin position="130"/>
        <end position="133"/>
    </location>
</feature>
<feature type="helix" evidence="11">
    <location>
        <begin position="134"/>
        <end position="149"/>
    </location>
</feature>
<feature type="strand" evidence="11">
    <location>
        <begin position="153"/>
        <end position="158"/>
    </location>
</feature>
<feature type="turn" evidence="11">
    <location>
        <begin position="160"/>
        <end position="165"/>
    </location>
</feature>
<feature type="helix" evidence="10">
    <location>
        <begin position="166"/>
        <end position="170"/>
    </location>
</feature>
<feature type="strand" evidence="11">
    <location>
        <begin position="175"/>
        <end position="179"/>
    </location>
</feature>
<feature type="helix" evidence="11">
    <location>
        <begin position="188"/>
        <end position="204"/>
    </location>
</feature>
<feature type="helix" evidence="11">
    <location>
        <begin position="212"/>
        <end position="215"/>
    </location>
</feature>
<keyword id="KW-0002">3D-structure</keyword>
<keyword id="KW-0227">DNA damage</keyword>
<keyword id="KW-0234">DNA repair</keyword>
<keyword id="KW-0238">DNA-binding</keyword>
<keyword id="KW-0378">Hydrolase</keyword>
<keyword id="KW-1185">Reference proteome</keyword>
<sequence>MNSVTVSHAPYTITYHDDWEPVMSQLVEFYNEVASWLLRDETSPIPDKFFIQLKQPLRNKRVCVCGIDPYPKDGTGVPFESPNFTKKSIKEIASSISRLTGVIDYKGYNLNIIDGVIPWNYYLSCKLGETKSHAIYWDKISKLLLQHITKHVSVLYCLGKTDYSNIRAKLESPVTTIVGYHPAARDRQFEKDRSFEIINVLLELDNKAPINWAQGFIY</sequence>
<organismHost>
    <name type="scientific">Bos taurus</name>
    <name type="common">Bovine</name>
    <dbReference type="NCBI Taxonomy" id="9913"/>
</organismHost>
<accession>P04303</accession>
<reference key="1">
    <citation type="journal article" date="1987" name="J. Virol.">
        <title>Nucleotide sequence and transcript organization of a region of the vaccinia virus genome which encodes a constitutively expressed gene required for DNA replication.</title>
        <authorList>
            <person name="Roseman N.A."/>
            <person name="Hruby D.E."/>
        </authorList>
    </citation>
    <scope>NUCLEOTIDE SEQUENCE [GENOMIC DNA]</scope>
</reference>
<reference key="2">
    <citation type="journal article" date="1986" name="Virology">
        <title>Nucleotide sequence and genetic map of the 16-kb vaccinia virus HindIII D fragment.</title>
        <authorList>
            <person name="Niles E.G."/>
            <person name="Condit R.C."/>
            <person name="Caro P."/>
            <person name="Davidson K."/>
            <person name="Matusick L."/>
            <person name="Seto J."/>
        </authorList>
    </citation>
    <scope>NUCLEOTIDE SEQUENCE [GENOMIC DNA]</scope>
</reference>
<reference key="3">
    <citation type="submission" date="2003-02" db="EMBL/GenBank/DDBJ databases">
        <title>Sequencing of the coding region of Vaccinia-WR to an average 9-fold redundancy and an error rate of 0.16/10kb.</title>
        <authorList>
            <person name="Esposito J.J."/>
            <person name="Frace A.M."/>
            <person name="Sammons S.A."/>
            <person name="Olsen-Rasmussen M."/>
            <person name="Osborne J."/>
            <person name="Wohlhueter R."/>
        </authorList>
    </citation>
    <scope>NUCLEOTIDE SEQUENCE [LARGE SCALE GENOMIC DNA]</scope>
</reference>
<reference key="4">
    <citation type="journal article" date="1994" name="Virology">
        <title>The vaccinia virus-encoded uracil DNA glycosylase has an essential role in viral DNA replication.</title>
        <authorList>
            <person name="Millns A.K."/>
            <person name="Carpenter M.S."/>
            <person name="DeLange A.M."/>
        </authorList>
    </citation>
    <scope>FUNCTION</scope>
</reference>
<reference key="5">
    <citation type="journal article" date="2006" name="J. Biol. Chem.">
        <title>Vaccinia virus uracil DNA glycosylase interacts with the A20 protein to form a heterodimeric processivity factor for the viral DNA polymerase.</title>
        <authorList>
            <person name="Stanitsa E.S."/>
            <person name="Arps L."/>
            <person name="Traktman P."/>
        </authorList>
    </citation>
    <scope>INTERACTION WITH PROTEIN OPG148</scope>
</reference>
<reference key="6">
    <citation type="journal article" date="2011" name="J. Biol. Chem.">
        <title>Evaluation of the role of the vaccinia virus uracil DNA glycosylase and A20 proteins as intrinsic components of the DNA polymerase holoenzyme.</title>
        <authorList>
            <person name="Boyle K.A."/>
            <person name="Stanitsa E.S."/>
            <person name="Greseth M.D."/>
            <person name="Lindgren J.K."/>
            <person name="Traktman P."/>
        </authorList>
    </citation>
    <scope>IDENTIFICATION IN A COMPLEX WITH OPG148 AND THE DNA POLYMERASE</scope>
    <scope>FUNCTION</scope>
    <scope>CATALYTIC ACTIVITY</scope>
</reference>
<reference evidence="8" key="7">
    <citation type="journal article" date="2007" name="BMC Struct. Biol.">
        <title>Crystal structure of vaccinia virus uracil-DNA glycosylase reveals dimeric assembly.</title>
        <authorList>
            <person name="Schormann N."/>
            <person name="Grigorian A."/>
            <person name="Samal A."/>
            <person name="Krishnan R."/>
            <person name="DeLucas L."/>
            <person name="Chattopadhyay D."/>
        </authorList>
    </citation>
    <scope>X-RAY CRYSTALLOGRAPHY (2.40 ANGSTROMS)</scope>
    <scope>SUBUNIT</scope>
</reference>
<reference key="8">
    <citation type="journal article" date="2010" name="J. Virol.">
        <title>Vaccinia virus D4 mutants defective in processive DNA synthesis retain binding to A20 and DNA.</title>
        <authorList>
            <person name="Druck Shudofsky A.M."/>
            <person name="Silverman J.E."/>
            <person name="Chattopadhyay D."/>
            <person name="Ricciardi R.P."/>
        </authorList>
    </citation>
    <scope>X-RAY CRYSTALLOGRAPHY (2.40 ANGSTROMS)</scope>
    <scope>FUNCTION</scope>
    <scope>INTERACTION WITH OPG148</scope>
    <scope>MUTAGENESIS OF LYS-126; LYS-160 AND ARG-187</scope>
</reference>
<protein>
    <recommendedName>
        <fullName>Uracil-DNA glycosylase</fullName>
        <shortName>UDG</shortName>
        <ecNumber evidence="5">3.2.2.27</ecNumber>
    </recommendedName>
</protein>
<name>UNG_VACCW</name>
<gene>
    <name type="primary">OPG116</name>
    <name type="synonym">UNG</name>
    <name type="ordered locus">VACWR109</name>
    <name type="ORF">D4R</name>
</gene>
<organism>
    <name type="scientific">Vaccinia virus (strain Western Reserve)</name>
    <name type="common">VACV</name>
    <name type="synonym">Vaccinia virus (strain WR)</name>
    <dbReference type="NCBI Taxonomy" id="10254"/>
    <lineage>
        <taxon>Viruses</taxon>
        <taxon>Varidnaviria</taxon>
        <taxon>Bamfordvirae</taxon>
        <taxon>Nucleocytoviricota</taxon>
        <taxon>Pokkesviricetes</taxon>
        <taxon>Chitovirales</taxon>
        <taxon>Poxviridae</taxon>
        <taxon>Chordopoxvirinae</taxon>
        <taxon>Orthopoxvirus</taxon>
        <taxon>Vaccinia virus</taxon>
    </lineage>
</organism>
<proteinExistence type="evidence at protein level"/>